<sequence>MALSPRDTTKRRAQRVRTRLRKVANGRPRLSVFRSAKNIYAQVIDDERGVTLAAASSLEGEKKDKGSDKDAAARVGALVAQRAIEKGVKDVVFDRGGYLYHGRVKALADAAREAGLNF</sequence>
<protein>
    <recommendedName>
        <fullName evidence="1">Large ribosomal subunit protein uL18</fullName>
    </recommendedName>
    <alternativeName>
        <fullName evidence="2">50S ribosomal protein L18</fullName>
    </alternativeName>
</protein>
<accession>B4R8N3</accession>
<keyword id="KW-1185">Reference proteome</keyword>
<keyword id="KW-0687">Ribonucleoprotein</keyword>
<keyword id="KW-0689">Ribosomal protein</keyword>
<keyword id="KW-0694">RNA-binding</keyword>
<keyword id="KW-0699">rRNA-binding</keyword>
<feature type="chain" id="PRO_1000142697" description="Large ribosomal subunit protein uL18">
    <location>
        <begin position="1"/>
        <end position="118"/>
    </location>
</feature>
<gene>
    <name evidence="1" type="primary">rplR</name>
    <name type="ordered locus">PHZ_c1246</name>
</gene>
<dbReference type="EMBL" id="CP000747">
    <property type="protein sequence ID" value="ACG77660.1"/>
    <property type="molecule type" value="Genomic_DNA"/>
</dbReference>
<dbReference type="RefSeq" id="WP_012521804.1">
    <property type="nucleotide sequence ID" value="NC_011144.1"/>
</dbReference>
<dbReference type="SMR" id="B4R8N3"/>
<dbReference type="STRING" id="450851.PHZ_c1246"/>
<dbReference type="KEGG" id="pzu:PHZ_c1246"/>
<dbReference type="eggNOG" id="COG0256">
    <property type="taxonomic scope" value="Bacteria"/>
</dbReference>
<dbReference type="HOGENOM" id="CLU_098841_0_1_5"/>
<dbReference type="OrthoDB" id="9810939at2"/>
<dbReference type="Proteomes" id="UP000001868">
    <property type="component" value="Chromosome"/>
</dbReference>
<dbReference type="GO" id="GO:0022625">
    <property type="term" value="C:cytosolic large ribosomal subunit"/>
    <property type="evidence" value="ECO:0007669"/>
    <property type="project" value="TreeGrafter"/>
</dbReference>
<dbReference type="GO" id="GO:0008097">
    <property type="term" value="F:5S rRNA binding"/>
    <property type="evidence" value="ECO:0007669"/>
    <property type="project" value="TreeGrafter"/>
</dbReference>
<dbReference type="GO" id="GO:0003735">
    <property type="term" value="F:structural constituent of ribosome"/>
    <property type="evidence" value="ECO:0007669"/>
    <property type="project" value="InterPro"/>
</dbReference>
<dbReference type="GO" id="GO:0006412">
    <property type="term" value="P:translation"/>
    <property type="evidence" value="ECO:0007669"/>
    <property type="project" value="UniProtKB-UniRule"/>
</dbReference>
<dbReference type="CDD" id="cd00432">
    <property type="entry name" value="Ribosomal_L18_L5e"/>
    <property type="match status" value="1"/>
</dbReference>
<dbReference type="FunFam" id="3.30.420.100:FF:000001">
    <property type="entry name" value="50S ribosomal protein L18"/>
    <property type="match status" value="1"/>
</dbReference>
<dbReference type="Gene3D" id="3.30.420.100">
    <property type="match status" value="1"/>
</dbReference>
<dbReference type="HAMAP" id="MF_01337_B">
    <property type="entry name" value="Ribosomal_uL18_B"/>
    <property type="match status" value="1"/>
</dbReference>
<dbReference type="InterPro" id="IPR004389">
    <property type="entry name" value="Ribosomal_uL18_bac-type"/>
</dbReference>
<dbReference type="InterPro" id="IPR005484">
    <property type="entry name" value="Ribosomal_uL18_bac/euk"/>
</dbReference>
<dbReference type="NCBIfam" id="TIGR00060">
    <property type="entry name" value="L18_bact"/>
    <property type="match status" value="1"/>
</dbReference>
<dbReference type="PANTHER" id="PTHR12899">
    <property type="entry name" value="39S RIBOSOMAL PROTEIN L18, MITOCHONDRIAL"/>
    <property type="match status" value="1"/>
</dbReference>
<dbReference type="PANTHER" id="PTHR12899:SF3">
    <property type="entry name" value="LARGE RIBOSOMAL SUBUNIT PROTEIN UL18M"/>
    <property type="match status" value="1"/>
</dbReference>
<dbReference type="Pfam" id="PF00861">
    <property type="entry name" value="Ribosomal_L18p"/>
    <property type="match status" value="1"/>
</dbReference>
<dbReference type="SUPFAM" id="SSF53137">
    <property type="entry name" value="Translational machinery components"/>
    <property type="match status" value="1"/>
</dbReference>
<reference key="1">
    <citation type="journal article" date="2008" name="BMC Genomics">
        <title>Complete genome of Phenylobacterium zucineum - a novel facultative intracellular bacterium isolated from human erythroleukemia cell line K562.</title>
        <authorList>
            <person name="Luo Y."/>
            <person name="Xu X."/>
            <person name="Ding Z."/>
            <person name="Liu Z."/>
            <person name="Zhang B."/>
            <person name="Yan Z."/>
            <person name="Sun J."/>
            <person name="Hu S."/>
            <person name="Hu X."/>
        </authorList>
    </citation>
    <scope>NUCLEOTIDE SEQUENCE [LARGE SCALE GENOMIC DNA]</scope>
    <source>
        <strain>HLK1</strain>
    </source>
</reference>
<name>RL18_PHEZH</name>
<organism>
    <name type="scientific">Phenylobacterium zucineum (strain HLK1)</name>
    <dbReference type="NCBI Taxonomy" id="450851"/>
    <lineage>
        <taxon>Bacteria</taxon>
        <taxon>Pseudomonadati</taxon>
        <taxon>Pseudomonadota</taxon>
        <taxon>Alphaproteobacteria</taxon>
        <taxon>Caulobacterales</taxon>
        <taxon>Caulobacteraceae</taxon>
        <taxon>Phenylobacterium</taxon>
    </lineage>
</organism>
<proteinExistence type="inferred from homology"/>
<comment type="function">
    <text evidence="1">This is one of the proteins that bind and probably mediate the attachment of the 5S RNA into the large ribosomal subunit, where it forms part of the central protuberance.</text>
</comment>
<comment type="subunit">
    <text evidence="1">Part of the 50S ribosomal subunit; part of the 5S rRNA/L5/L18/L25 subcomplex. Contacts the 5S and 23S rRNAs.</text>
</comment>
<comment type="similarity">
    <text evidence="1">Belongs to the universal ribosomal protein uL18 family.</text>
</comment>
<evidence type="ECO:0000255" key="1">
    <source>
        <dbReference type="HAMAP-Rule" id="MF_01337"/>
    </source>
</evidence>
<evidence type="ECO:0000305" key="2"/>